<sequence>MISAQAVKELRERTGAGMMDCKNALIEANGDIEKAIDILREKGLAAAAKKAGRTANEGLVEAYIHGGGRIGVLVEVNCETDFVANTEEFRNFVKEICMQIAAANPKYISKEDVPQEVLEKEKEILRAQALNEGKPANVIDRIVEGRLEKFYKENCLLEQEYIRDPEKTVKDLLNEMIAKLGENIVIRRFARFERGEGIEK</sequence>
<reference key="1">
    <citation type="journal article" date="2002" name="Genome Res.">
        <title>A complete sequence of the T. tengcongensis genome.</title>
        <authorList>
            <person name="Bao Q."/>
            <person name="Tian Y."/>
            <person name="Li W."/>
            <person name="Xu Z."/>
            <person name="Xuan Z."/>
            <person name="Hu S."/>
            <person name="Dong W."/>
            <person name="Yang J."/>
            <person name="Chen Y."/>
            <person name="Xue Y."/>
            <person name="Xu Y."/>
            <person name="Lai X."/>
            <person name="Huang L."/>
            <person name="Dong X."/>
            <person name="Ma Y."/>
            <person name="Ling L."/>
            <person name="Tan H."/>
            <person name="Chen R."/>
            <person name="Wang J."/>
            <person name="Yu J."/>
            <person name="Yang H."/>
        </authorList>
    </citation>
    <scope>NUCLEOTIDE SEQUENCE [LARGE SCALE GENOMIC DNA]</scope>
    <source>
        <strain>DSM 15242 / JCM 11007 / NBRC 100824 / MB4</strain>
    </source>
</reference>
<gene>
    <name evidence="1" type="primary">tsf</name>
    <name type="ordered locus">TTE1408</name>
</gene>
<dbReference type="EMBL" id="AE008691">
    <property type="protein sequence ID" value="AAM24630.1"/>
    <property type="molecule type" value="Genomic_DNA"/>
</dbReference>
<dbReference type="RefSeq" id="WP_011025686.1">
    <property type="nucleotide sequence ID" value="NC_003869.1"/>
</dbReference>
<dbReference type="SMR" id="Q8RA22"/>
<dbReference type="STRING" id="273068.TTE1408"/>
<dbReference type="KEGG" id="tte:TTE1408"/>
<dbReference type="eggNOG" id="COG0264">
    <property type="taxonomic scope" value="Bacteria"/>
</dbReference>
<dbReference type="HOGENOM" id="CLU_047155_1_1_9"/>
<dbReference type="OrthoDB" id="9808348at2"/>
<dbReference type="Proteomes" id="UP000000555">
    <property type="component" value="Chromosome"/>
</dbReference>
<dbReference type="GO" id="GO:0005737">
    <property type="term" value="C:cytoplasm"/>
    <property type="evidence" value="ECO:0007669"/>
    <property type="project" value="UniProtKB-SubCell"/>
</dbReference>
<dbReference type="GO" id="GO:0003746">
    <property type="term" value="F:translation elongation factor activity"/>
    <property type="evidence" value="ECO:0007669"/>
    <property type="project" value="UniProtKB-UniRule"/>
</dbReference>
<dbReference type="CDD" id="cd14275">
    <property type="entry name" value="UBA_EF-Ts"/>
    <property type="match status" value="1"/>
</dbReference>
<dbReference type="FunFam" id="1.10.286.20:FF:000001">
    <property type="entry name" value="Elongation factor Ts"/>
    <property type="match status" value="1"/>
</dbReference>
<dbReference type="FunFam" id="1.10.8.10:FF:000001">
    <property type="entry name" value="Elongation factor Ts"/>
    <property type="match status" value="1"/>
</dbReference>
<dbReference type="Gene3D" id="1.10.286.20">
    <property type="match status" value="1"/>
</dbReference>
<dbReference type="Gene3D" id="1.10.8.10">
    <property type="entry name" value="DNA helicase RuvA subunit, C-terminal domain"/>
    <property type="match status" value="1"/>
</dbReference>
<dbReference type="Gene3D" id="3.30.479.20">
    <property type="entry name" value="Elongation factor Ts, dimerisation domain"/>
    <property type="match status" value="1"/>
</dbReference>
<dbReference type="HAMAP" id="MF_00050">
    <property type="entry name" value="EF_Ts"/>
    <property type="match status" value="1"/>
</dbReference>
<dbReference type="InterPro" id="IPR036402">
    <property type="entry name" value="EF-Ts_dimer_sf"/>
</dbReference>
<dbReference type="InterPro" id="IPR001816">
    <property type="entry name" value="Transl_elong_EFTs/EF1B"/>
</dbReference>
<dbReference type="InterPro" id="IPR014039">
    <property type="entry name" value="Transl_elong_EFTs/EF1B_dimer"/>
</dbReference>
<dbReference type="InterPro" id="IPR018101">
    <property type="entry name" value="Transl_elong_Ts_CS"/>
</dbReference>
<dbReference type="InterPro" id="IPR009060">
    <property type="entry name" value="UBA-like_sf"/>
</dbReference>
<dbReference type="NCBIfam" id="TIGR00116">
    <property type="entry name" value="tsf"/>
    <property type="match status" value="2"/>
</dbReference>
<dbReference type="PANTHER" id="PTHR11741">
    <property type="entry name" value="ELONGATION FACTOR TS"/>
    <property type="match status" value="1"/>
</dbReference>
<dbReference type="PANTHER" id="PTHR11741:SF0">
    <property type="entry name" value="ELONGATION FACTOR TS, MITOCHONDRIAL"/>
    <property type="match status" value="1"/>
</dbReference>
<dbReference type="Pfam" id="PF00889">
    <property type="entry name" value="EF_TS"/>
    <property type="match status" value="1"/>
</dbReference>
<dbReference type="SUPFAM" id="SSF54713">
    <property type="entry name" value="Elongation factor Ts (EF-Ts), dimerisation domain"/>
    <property type="match status" value="1"/>
</dbReference>
<dbReference type="SUPFAM" id="SSF46934">
    <property type="entry name" value="UBA-like"/>
    <property type="match status" value="1"/>
</dbReference>
<dbReference type="PROSITE" id="PS01126">
    <property type="entry name" value="EF_TS_1"/>
    <property type="match status" value="1"/>
</dbReference>
<dbReference type="PROSITE" id="PS01127">
    <property type="entry name" value="EF_TS_2"/>
    <property type="match status" value="1"/>
</dbReference>
<keyword id="KW-0963">Cytoplasm</keyword>
<keyword id="KW-0251">Elongation factor</keyword>
<keyword id="KW-0648">Protein biosynthesis</keyword>
<keyword id="KW-1185">Reference proteome</keyword>
<name>EFTS_CALS4</name>
<proteinExistence type="inferred from homology"/>
<organism>
    <name type="scientific">Caldanaerobacter subterraneus subsp. tengcongensis (strain DSM 15242 / JCM 11007 / NBRC 100824 / MB4)</name>
    <name type="common">Thermoanaerobacter tengcongensis</name>
    <dbReference type="NCBI Taxonomy" id="273068"/>
    <lineage>
        <taxon>Bacteria</taxon>
        <taxon>Bacillati</taxon>
        <taxon>Bacillota</taxon>
        <taxon>Clostridia</taxon>
        <taxon>Thermoanaerobacterales</taxon>
        <taxon>Thermoanaerobacteraceae</taxon>
        <taxon>Caldanaerobacter</taxon>
    </lineage>
</organism>
<accession>Q8RA22</accession>
<comment type="function">
    <text evidence="1">Associates with the EF-Tu.GDP complex and induces the exchange of GDP to GTP. It remains bound to the aminoacyl-tRNA.EF-Tu.GTP complex up to the GTP hydrolysis stage on the ribosome.</text>
</comment>
<comment type="subcellular location">
    <subcellularLocation>
        <location evidence="1">Cytoplasm</location>
    </subcellularLocation>
</comment>
<comment type="similarity">
    <text evidence="1">Belongs to the EF-Ts family.</text>
</comment>
<feature type="chain" id="PRO_0000161223" description="Elongation factor Ts">
    <location>
        <begin position="1"/>
        <end position="200"/>
    </location>
</feature>
<feature type="region of interest" description="Involved in Mg(2+) ion dislocation from EF-Tu" evidence="1">
    <location>
        <begin position="80"/>
        <end position="83"/>
    </location>
</feature>
<evidence type="ECO:0000255" key="1">
    <source>
        <dbReference type="HAMAP-Rule" id="MF_00050"/>
    </source>
</evidence>
<protein>
    <recommendedName>
        <fullName evidence="1">Elongation factor Ts</fullName>
        <shortName evidence="1">EF-Ts</shortName>
    </recommendedName>
</protein>